<feature type="chain" id="PRO_0000429364" description="Class-10 pathogenesis-related protein 1">
    <location>
        <begin position="1"/>
        <end position="157"/>
    </location>
</feature>
<comment type="tissue specificity">
    <text evidence="1">Expressed in roots. Detected in nodules and leaves, but not in stems and flowers.</text>
</comment>
<comment type="induction">
    <text evidence="1">Not induced during nodulation. Up-regulated upon pathogen infection.</text>
</comment>
<comment type="similarity">
    <text evidence="2">Belongs to the BetVI family.</text>
</comment>
<protein>
    <recommendedName>
        <fullName>Class-10 pathogenesis-related protein 1</fullName>
        <shortName>MtPR10-1</shortName>
    </recommendedName>
    <alternativeName>
        <fullName>Pathogenesis-related PR10-like protein 1</fullName>
    </alternativeName>
</protein>
<evidence type="ECO:0000269" key="1">
    <source>
    </source>
</evidence>
<evidence type="ECO:0000305" key="2"/>
<gene>
    <name type="primary">PR10-1</name>
    <name type="ordered locus">MTR_2g035100</name>
</gene>
<name>PR101_MEDTR</name>
<sequence>MGVFNFEDETTSIVAPARLYKALVTDSDNLIPKVIDAIQSIEIVEGNGGAGTIKKLTFVEGGETKYDLHKVDLVDDVNFAYNYSIVGGGGLPDTVEKISFESKLSAGPDGGSIAKLTVKYFTKGDAAPSEEEIKGGKARGDGLFKALEGYVLANPDY</sequence>
<organism>
    <name type="scientific">Medicago truncatula</name>
    <name type="common">Barrel medic</name>
    <name type="synonym">Medicago tribuloides</name>
    <dbReference type="NCBI Taxonomy" id="3880"/>
    <lineage>
        <taxon>Eukaryota</taxon>
        <taxon>Viridiplantae</taxon>
        <taxon>Streptophyta</taxon>
        <taxon>Embryophyta</taxon>
        <taxon>Tracheophyta</taxon>
        <taxon>Spermatophyta</taxon>
        <taxon>Magnoliopsida</taxon>
        <taxon>eudicotyledons</taxon>
        <taxon>Gunneridae</taxon>
        <taxon>Pentapetalae</taxon>
        <taxon>rosids</taxon>
        <taxon>fabids</taxon>
        <taxon>Fabales</taxon>
        <taxon>Fabaceae</taxon>
        <taxon>Papilionoideae</taxon>
        <taxon>50 kb inversion clade</taxon>
        <taxon>NPAAA clade</taxon>
        <taxon>Hologalegina</taxon>
        <taxon>IRL clade</taxon>
        <taxon>Trifolieae</taxon>
        <taxon>Medicago</taxon>
    </lineage>
</organism>
<keyword id="KW-0568">Pathogenesis-related protein</keyword>
<keyword id="KW-0611">Plant defense</keyword>
<keyword id="KW-1185">Reference proteome</keyword>
<proteinExistence type="evidence at transcript level"/>
<reference key="1">
    <citation type="journal article" date="1998" name="Mol. Plant Microbe Interact.">
        <title>Symbiosis-specific expression of two Medicago truncatula nodulin genes, MtN1 and MtN13, encoding products homologous to plant defense proteins.</title>
        <authorList>
            <person name="Gamas P."/>
            <person name="de Billy F."/>
            <person name="Truchet G."/>
        </authorList>
    </citation>
    <scope>NUCLEOTIDE SEQUENCE [MRNA]</scope>
    <scope>INDUCTION</scope>
    <scope>TISSUE SPECIFICITY</scope>
    <source>
        <strain>cv. Jemalong J5</strain>
        <tissue>Root</tissue>
    </source>
</reference>
<reference key="2">
    <citation type="journal article" date="2011" name="Nature">
        <title>The Medicago genome provides insight into the evolution of rhizobial symbioses.</title>
        <authorList>
            <person name="Young N.D."/>
            <person name="Debelle F."/>
            <person name="Oldroyd G.E.D."/>
            <person name="Geurts R."/>
            <person name="Cannon S.B."/>
            <person name="Udvardi M.K."/>
            <person name="Benedito V.A."/>
            <person name="Mayer K.F.X."/>
            <person name="Gouzy J."/>
            <person name="Schoof H."/>
            <person name="Van de Peer Y."/>
            <person name="Proost S."/>
            <person name="Cook D.R."/>
            <person name="Meyers B.C."/>
            <person name="Spannagl M."/>
            <person name="Cheung F."/>
            <person name="De Mita S."/>
            <person name="Krishnakumar V."/>
            <person name="Gundlach H."/>
            <person name="Zhou S."/>
            <person name="Mudge J."/>
            <person name="Bharti A.K."/>
            <person name="Murray J.D."/>
            <person name="Naoumkina M.A."/>
            <person name="Rosen B."/>
            <person name="Silverstein K.A.T."/>
            <person name="Tang H."/>
            <person name="Rombauts S."/>
            <person name="Zhao P.X."/>
            <person name="Zhou P."/>
            <person name="Barbe V."/>
            <person name="Bardou P."/>
            <person name="Bechner M."/>
            <person name="Bellec A."/>
            <person name="Berger A."/>
            <person name="Berges H."/>
            <person name="Bidwell S."/>
            <person name="Bisseling T."/>
            <person name="Choisne N."/>
            <person name="Couloux A."/>
            <person name="Denny R."/>
            <person name="Deshpande S."/>
            <person name="Dai X."/>
            <person name="Doyle J.J."/>
            <person name="Dudez A.-M."/>
            <person name="Farmer A.D."/>
            <person name="Fouteau S."/>
            <person name="Franken C."/>
            <person name="Gibelin C."/>
            <person name="Gish J."/>
            <person name="Goldstein S."/>
            <person name="Gonzalez A.J."/>
            <person name="Green P.J."/>
            <person name="Hallab A."/>
            <person name="Hartog M."/>
            <person name="Hua A."/>
            <person name="Humphray S.J."/>
            <person name="Jeong D.-H."/>
            <person name="Jing Y."/>
            <person name="Jocker A."/>
            <person name="Kenton S.M."/>
            <person name="Kim D.-J."/>
            <person name="Klee K."/>
            <person name="Lai H."/>
            <person name="Lang C."/>
            <person name="Lin S."/>
            <person name="Macmil S.L."/>
            <person name="Magdelenat G."/>
            <person name="Matthews L."/>
            <person name="McCorrison J."/>
            <person name="Monaghan E.L."/>
            <person name="Mun J.-H."/>
            <person name="Najar F.Z."/>
            <person name="Nicholson C."/>
            <person name="Noirot C."/>
            <person name="O'Bleness M."/>
            <person name="Paule C.R."/>
            <person name="Poulain J."/>
            <person name="Prion F."/>
            <person name="Qin B."/>
            <person name="Qu C."/>
            <person name="Retzel E.F."/>
            <person name="Riddle C."/>
            <person name="Sallet E."/>
            <person name="Samain S."/>
            <person name="Samson N."/>
            <person name="Sanders I."/>
            <person name="Saurat O."/>
            <person name="Scarpelli C."/>
            <person name="Schiex T."/>
            <person name="Segurens B."/>
            <person name="Severin A.J."/>
            <person name="Sherrier D.J."/>
            <person name="Shi R."/>
            <person name="Sims S."/>
            <person name="Singer S.R."/>
            <person name="Sinharoy S."/>
            <person name="Sterck L."/>
            <person name="Viollet A."/>
            <person name="Wang B.-B."/>
            <person name="Wang K."/>
            <person name="Wang M."/>
            <person name="Wang X."/>
            <person name="Warfsmann J."/>
            <person name="Weissenbach J."/>
            <person name="White D.D."/>
            <person name="White J.D."/>
            <person name="Wiley G.B."/>
            <person name="Wincker P."/>
            <person name="Xing Y."/>
            <person name="Yang L."/>
            <person name="Yao Z."/>
            <person name="Ying F."/>
            <person name="Zhai J."/>
            <person name="Zhou L."/>
            <person name="Zuber A."/>
            <person name="Denarie J."/>
            <person name="Dixon R.A."/>
            <person name="May G.D."/>
            <person name="Schwartz D.C."/>
            <person name="Rogers J."/>
            <person name="Quetier F."/>
            <person name="Town C.D."/>
            <person name="Roe B.A."/>
        </authorList>
    </citation>
    <scope>NUCLEOTIDE SEQUENCE [LARGE SCALE GENOMIC DNA]</scope>
    <source>
        <strain>cv. Jemalong A17</strain>
    </source>
</reference>
<reference key="3">
    <citation type="journal article" date="2014" name="BMC Genomics">
        <title>An improved genome release (version Mt4.0) for the model legume Medicago truncatula.</title>
        <authorList>
            <person name="Tang H."/>
            <person name="Krishnakumar V."/>
            <person name="Bidwell S."/>
            <person name="Rosen B."/>
            <person name="Chan A."/>
            <person name="Zhou S."/>
            <person name="Gentzbittel L."/>
            <person name="Childs K.L."/>
            <person name="Yandell M."/>
            <person name="Gundlach H."/>
            <person name="Mayer K.F."/>
            <person name="Schwartz D.C."/>
            <person name="Town C.D."/>
        </authorList>
    </citation>
    <scope>GENOME REANNOTATION</scope>
    <source>
        <strain>cv. Jemalong A17</strain>
    </source>
</reference>
<reference key="4">
    <citation type="submission" date="2012-05" db="EMBL/GenBank/DDBJ databases">
        <authorList>
            <person name="Krishnakumar V."/>
            <person name="Cheung F."/>
            <person name="Xiao Y."/>
            <person name="Chan A."/>
            <person name="Moskal W.A."/>
            <person name="Town C.D."/>
        </authorList>
    </citation>
    <scope>NUCLEOTIDE SEQUENCE [LARGE SCALE MRNA]</scope>
</reference>
<accession>P93333</accession>
<dbReference type="EMBL" id="Y08641">
    <property type="protein sequence ID" value="CAA69931.1"/>
    <property type="molecule type" value="mRNA"/>
</dbReference>
<dbReference type="EMBL" id="CM001218">
    <property type="protein sequence ID" value="AES65080.1"/>
    <property type="molecule type" value="Genomic_DNA"/>
</dbReference>
<dbReference type="EMBL" id="BT147465">
    <property type="protein sequence ID" value="AFK47259.1"/>
    <property type="molecule type" value="mRNA"/>
</dbReference>
<dbReference type="EMBL" id="BT148546">
    <property type="protein sequence ID" value="AFK48340.1"/>
    <property type="molecule type" value="mRNA"/>
</dbReference>
<dbReference type="RefSeq" id="NP_001391971.1">
    <property type="nucleotide sequence ID" value="NM_001405042.1"/>
</dbReference>
<dbReference type="RefSeq" id="XP_003594829.1">
    <property type="nucleotide sequence ID" value="XM_003594781.2"/>
</dbReference>
<dbReference type="SMR" id="P93333"/>
<dbReference type="STRING" id="3880.P93333"/>
<dbReference type="PaxDb" id="3880-AES65079"/>
<dbReference type="EnsemblPlants" id="rna8894">
    <property type="protein sequence ID" value="RHN73112.1"/>
    <property type="gene ID" value="gene8894"/>
</dbReference>
<dbReference type="EnsemblPlants" id="rna8896">
    <property type="protein sequence ID" value="RHN73113.1"/>
    <property type="gene ID" value="gene8896"/>
</dbReference>
<dbReference type="GeneID" id="11416844"/>
<dbReference type="Gramene" id="rna8894">
    <property type="protein sequence ID" value="RHN73112.1"/>
    <property type="gene ID" value="gene8894"/>
</dbReference>
<dbReference type="Gramene" id="rna8896">
    <property type="protein sequence ID" value="RHN73113.1"/>
    <property type="gene ID" value="gene8896"/>
</dbReference>
<dbReference type="KEGG" id="mtr:11416844"/>
<dbReference type="eggNOG" id="ENOG502RXTQ">
    <property type="taxonomic scope" value="Eukaryota"/>
</dbReference>
<dbReference type="HOGENOM" id="CLU_081988_2_0_1"/>
<dbReference type="OrthoDB" id="1858506at2759"/>
<dbReference type="Proteomes" id="UP000002051">
    <property type="component" value="Chromosome 2"/>
</dbReference>
<dbReference type="GO" id="GO:0005737">
    <property type="term" value="C:cytoplasm"/>
    <property type="evidence" value="ECO:0000318"/>
    <property type="project" value="GO_Central"/>
</dbReference>
<dbReference type="GO" id="GO:0005634">
    <property type="term" value="C:nucleus"/>
    <property type="evidence" value="ECO:0000318"/>
    <property type="project" value="GO_Central"/>
</dbReference>
<dbReference type="GO" id="GO:0010427">
    <property type="term" value="F:abscisic acid binding"/>
    <property type="evidence" value="ECO:0000318"/>
    <property type="project" value="GO_Central"/>
</dbReference>
<dbReference type="GO" id="GO:0004864">
    <property type="term" value="F:protein phosphatase inhibitor activity"/>
    <property type="evidence" value="ECO:0000318"/>
    <property type="project" value="GO_Central"/>
</dbReference>
<dbReference type="GO" id="GO:0038023">
    <property type="term" value="F:signaling receptor activity"/>
    <property type="evidence" value="ECO:0000318"/>
    <property type="project" value="GO_Central"/>
</dbReference>
<dbReference type="GO" id="GO:0009738">
    <property type="term" value="P:abscisic acid-activated signaling pathway"/>
    <property type="evidence" value="ECO:0000318"/>
    <property type="project" value="GO_Central"/>
</dbReference>
<dbReference type="GO" id="GO:0006952">
    <property type="term" value="P:defense response"/>
    <property type="evidence" value="ECO:0007669"/>
    <property type="project" value="UniProtKB-KW"/>
</dbReference>
<dbReference type="CDD" id="cd07816">
    <property type="entry name" value="Bet_v1-like"/>
    <property type="match status" value="1"/>
</dbReference>
<dbReference type="FunFam" id="3.30.530.20:FF:000007">
    <property type="entry name" value="Major pollen allergen Bet v 1-A"/>
    <property type="match status" value="1"/>
</dbReference>
<dbReference type="Gene3D" id="3.30.530.20">
    <property type="match status" value="1"/>
</dbReference>
<dbReference type="InterPro" id="IPR000916">
    <property type="entry name" value="Bet_v_I/MLP"/>
</dbReference>
<dbReference type="InterPro" id="IPR024949">
    <property type="entry name" value="Bet_v_I_allergen"/>
</dbReference>
<dbReference type="InterPro" id="IPR050279">
    <property type="entry name" value="Plant_def-hormone_signal"/>
</dbReference>
<dbReference type="InterPro" id="IPR023393">
    <property type="entry name" value="START-like_dom_sf"/>
</dbReference>
<dbReference type="PANTHER" id="PTHR31213">
    <property type="entry name" value="OS08G0374000 PROTEIN-RELATED"/>
    <property type="match status" value="1"/>
</dbReference>
<dbReference type="PANTHER" id="PTHR31213:SF55">
    <property type="entry name" value="STRESS-INDUCED PROTEIN SAM22"/>
    <property type="match status" value="1"/>
</dbReference>
<dbReference type="Pfam" id="PF00407">
    <property type="entry name" value="Bet_v_1"/>
    <property type="match status" value="1"/>
</dbReference>
<dbReference type="PRINTS" id="PR00634">
    <property type="entry name" value="BETALLERGEN"/>
</dbReference>
<dbReference type="SUPFAM" id="SSF55961">
    <property type="entry name" value="Bet v1-like"/>
    <property type="match status" value="1"/>
</dbReference>
<dbReference type="PROSITE" id="PS00451">
    <property type="entry name" value="PATHOGENESIS_BETVI"/>
    <property type="match status" value="1"/>
</dbReference>